<keyword id="KW-0963">Cytoplasm</keyword>
<keyword id="KW-0489">Methyltransferase</keyword>
<keyword id="KW-0694">RNA-binding</keyword>
<keyword id="KW-0698">rRNA processing</keyword>
<keyword id="KW-0949">S-adenosyl-L-methionine</keyword>
<keyword id="KW-0808">Transferase</keyword>
<sequence length="294" mass="32704">MTIRLLGRTEIRRLAKDIDFRPRKSFGQNFVHDANTVRRIVSASGVHRHDHVLEVGPGLGSLTLALLDRGAHVTAVEIDPLLAQQLPTTIADHSHSEINRLTVLNQDILTLMPSDLENQPTALVANLPYNVAVPALLHLLAEFPTIRSVMVMVQAEVAERLAADPGGKDYGVPSAKVRFYGNVRRYGMVSPTVFWPIPRVYSGLVRIDRYETSPWPTDADFRAQVFDLIDIAFAQRRKTSRNAFAEWAGSGNESARRLLAASIDPSRRGETLAIADFVRLLQRSGEAEEQVRVQ</sequence>
<comment type="function">
    <text evidence="1">Specifically dimethylates two adjacent adenosines (A1518 and A1519) in the loop of a conserved hairpin near the 3'-end of 16S rRNA in the 30S particle. May play a critical role in biogenesis of 30S subunits.</text>
</comment>
<comment type="catalytic activity">
    <reaction evidence="1">
        <text>adenosine(1518)/adenosine(1519) in 16S rRNA + 4 S-adenosyl-L-methionine = N(6)-dimethyladenosine(1518)/N(6)-dimethyladenosine(1519) in 16S rRNA + 4 S-adenosyl-L-homocysteine + 4 H(+)</text>
        <dbReference type="Rhea" id="RHEA:19609"/>
        <dbReference type="Rhea" id="RHEA-COMP:10232"/>
        <dbReference type="Rhea" id="RHEA-COMP:10233"/>
        <dbReference type="ChEBI" id="CHEBI:15378"/>
        <dbReference type="ChEBI" id="CHEBI:57856"/>
        <dbReference type="ChEBI" id="CHEBI:59789"/>
        <dbReference type="ChEBI" id="CHEBI:74411"/>
        <dbReference type="ChEBI" id="CHEBI:74493"/>
        <dbReference type="EC" id="2.1.1.182"/>
    </reaction>
</comment>
<comment type="subcellular location">
    <subcellularLocation>
        <location evidence="1">Cytoplasm</location>
    </subcellularLocation>
</comment>
<comment type="similarity">
    <text evidence="1">Belongs to the class I-like SAM-binding methyltransferase superfamily. rRNA adenine N(6)-methyltransferase family. RsmA subfamily.</text>
</comment>
<gene>
    <name evidence="1" type="primary">rsmA</name>
    <name evidence="1" type="synonym">ksgA</name>
    <name type="ordered locus">Mkms_4349</name>
</gene>
<organism>
    <name type="scientific">Mycobacterium sp. (strain KMS)</name>
    <dbReference type="NCBI Taxonomy" id="189918"/>
    <lineage>
        <taxon>Bacteria</taxon>
        <taxon>Bacillati</taxon>
        <taxon>Actinomycetota</taxon>
        <taxon>Actinomycetes</taxon>
        <taxon>Mycobacteriales</taxon>
        <taxon>Mycobacteriaceae</taxon>
        <taxon>Mycobacterium</taxon>
    </lineage>
</organism>
<protein>
    <recommendedName>
        <fullName evidence="1">Ribosomal RNA small subunit methyltransferase A</fullName>
        <ecNumber evidence="1">2.1.1.182</ecNumber>
    </recommendedName>
    <alternativeName>
        <fullName evidence="1">16S rRNA (adenine(1518)-N(6)/adenine(1519)-N(6))-dimethyltransferase</fullName>
    </alternativeName>
    <alternativeName>
        <fullName evidence="1">16S rRNA dimethyladenosine transferase</fullName>
    </alternativeName>
    <alternativeName>
        <fullName evidence="1">16S rRNA dimethylase</fullName>
    </alternativeName>
    <alternativeName>
        <fullName evidence="1">S-adenosylmethionine-6-N', N'-adenosyl(rRNA) dimethyltransferase</fullName>
    </alternativeName>
</protein>
<reference key="1">
    <citation type="submission" date="2006-12" db="EMBL/GenBank/DDBJ databases">
        <title>Complete sequence of chromosome of Mycobacterium sp. KMS.</title>
        <authorList>
            <consortium name="US DOE Joint Genome Institute"/>
            <person name="Copeland A."/>
            <person name="Lucas S."/>
            <person name="Lapidus A."/>
            <person name="Barry K."/>
            <person name="Detter J.C."/>
            <person name="Glavina del Rio T."/>
            <person name="Hammon N."/>
            <person name="Israni S."/>
            <person name="Dalin E."/>
            <person name="Tice H."/>
            <person name="Pitluck S."/>
            <person name="Kiss H."/>
            <person name="Brettin T."/>
            <person name="Bruce D."/>
            <person name="Han C."/>
            <person name="Tapia R."/>
            <person name="Gilna P."/>
            <person name="Schmutz J."/>
            <person name="Larimer F."/>
            <person name="Land M."/>
            <person name="Hauser L."/>
            <person name="Kyrpides N."/>
            <person name="Mikhailova N."/>
            <person name="Miller C.D."/>
            <person name="Richardson P."/>
        </authorList>
    </citation>
    <scope>NUCLEOTIDE SEQUENCE [LARGE SCALE GENOMIC DNA]</scope>
    <source>
        <strain>KMS</strain>
    </source>
</reference>
<evidence type="ECO:0000255" key="1">
    <source>
        <dbReference type="HAMAP-Rule" id="MF_00607"/>
    </source>
</evidence>
<feature type="chain" id="PRO_1000130297" description="Ribosomal RNA small subunit methyltransferase A">
    <location>
        <begin position="1"/>
        <end position="294"/>
    </location>
</feature>
<feature type="binding site" evidence="1">
    <location>
        <position position="29"/>
    </location>
    <ligand>
        <name>S-adenosyl-L-methionine</name>
        <dbReference type="ChEBI" id="CHEBI:59789"/>
    </ligand>
</feature>
<feature type="binding site" evidence="1">
    <location>
        <position position="31"/>
    </location>
    <ligand>
        <name>S-adenosyl-L-methionine</name>
        <dbReference type="ChEBI" id="CHEBI:59789"/>
    </ligand>
</feature>
<feature type="binding site" evidence="1">
    <location>
        <position position="56"/>
    </location>
    <ligand>
        <name>S-adenosyl-L-methionine</name>
        <dbReference type="ChEBI" id="CHEBI:59789"/>
    </ligand>
</feature>
<feature type="binding site" evidence="1">
    <location>
        <position position="77"/>
    </location>
    <ligand>
        <name>S-adenosyl-L-methionine</name>
        <dbReference type="ChEBI" id="CHEBI:59789"/>
    </ligand>
</feature>
<feature type="binding site" evidence="1">
    <location>
        <position position="107"/>
    </location>
    <ligand>
        <name>S-adenosyl-L-methionine</name>
        <dbReference type="ChEBI" id="CHEBI:59789"/>
    </ligand>
</feature>
<feature type="binding site" evidence="1">
    <location>
        <position position="126"/>
    </location>
    <ligand>
        <name>S-adenosyl-L-methionine</name>
        <dbReference type="ChEBI" id="CHEBI:59789"/>
    </ligand>
</feature>
<dbReference type="EC" id="2.1.1.182" evidence="1"/>
<dbReference type="EMBL" id="CP000518">
    <property type="protein sequence ID" value="ABL93540.1"/>
    <property type="molecule type" value="Genomic_DNA"/>
</dbReference>
<dbReference type="SMR" id="A1UL32"/>
<dbReference type="STRING" id="189918.Mkms_4349"/>
<dbReference type="KEGG" id="mkm:Mkms_4349"/>
<dbReference type="HOGENOM" id="CLU_041220_1_1_11"/>
<dbReference type="OrthoDB" id="9814755at2"/>
<dbReference type="GO" id="GO:0005829">
    <property type="term" value="C:cytosol"/>
    <property type="evidence" value="ECO:0007669"/>
    <property type="project" value="TreeGrafter"/>
</dbReference>
<dbReference type="GO" id="GO:0052908">
    <property type="term" value="F:16S rRNA (adenine(1518)-N(6)/adenine(1519)-N(6))-dimethyltransferase activity"/>
    <property type="evidence" value="ECO:0007669"/>
    <property type="project" value="UniProtKB-EC"/>
</dbReference>
<dbReference type="GO" id="GO:0003723">
    <property type="term" value="F:RNA binding"/>
    <property type="evidence" value="ECO:0007669"/>
    <property type="project" value="UniProtKB-KW"/>
</dbReference>
<dbReference type="CDD" id="cd02440">
    <property type="entry name" value="AdoMet_MTases"/>
    <property type="match status" value="1"/>
</dbReference>
<dbReference type="FunFam" id="1.10.8.100:FF:000003">
    <property type="entry name" value="Ribosomal RNA small subunit methyltransferase A"/>
    <property type="match status" value="1"/>
</dbReference>
<dbReference type="FunFam" id="3.40.50.150:FF:000023">
    <property type="entry name" value="Ribosomal RNA small subunit methyltransferase A"/>
    <property type="match status" value="1"/>
</dbReference>
<dbReference type="Gene3D" id="1.10.8.100">
    <property type="entry name" value="Ribosomal RNA adenine dimethylase-like, domain 2"/>
    <property type="match status" value="1"/>
</dbReference>
<dbReference type="Gene3D" id="3.40.50.150">
    <property type="entry name" value="Vaccinia Virus protein VP39"/>
    <property type="match status" value="1"/>
</dbReference>
<dbReference type="HAMAP" id="MF_00607">
    <property type="entry name" value="16SrRNA_methyltr_A"/>
    <property type="match status" value="1"/>
</dbReference>
<dbReference type="InterPro" id="IPR001737">
    <property type="entry name" value="KsgA/Erm"/>
</dbReference>
<dbReference type="InterPro" id="IPR023165">
    <property type="entry name" value="rRNA_Ade_diMease-like_C"/>
</dbReference>
<dbReference type="InterPro" id="IPR020596">
    <property type="entry name" value="rRNA_Ade_Mease_Trfase_CS"/>
</dbReference>
<dbReference type="InterPro" id="IPR020598">
    <property type="entry name" value="rRNA_Ade_methylase_Trfase_N"/>
</dbReference>
<dbReference type="InterPro" id="IPR011530">
    <property type="entry name" value="rRNA_adenine_dimethylase"/>
</dbReference>
<dbReference type="InterPro" id="IPR029063">
    <property type="entry name" value="SAM-dependent_MTases_sf"/>
</dbReference>
<dbReference type="NCBIfam" id="TIGR00755">
    <property type="entry name" value="ksgA"/>
    <property type="match status" value="1"/>
</dbReference>
<dbReference type="PANTHER" id="PTHR11727">
    <property type="entry name" value="DIMETHYLADENOSINE TRANSFERASE"/>
    <property type="match status" value="1"/>
</dbReference>
<dbReference type="PANTHER" id="PTHR11727:SF7">
    <property type="entry name" value="DIMETHYLADENOSINE TRANSFERASE-RELATED"/>
    <property type="match status" value="1"/>
</dbReference>
<dbReference type="Pfam" id="PF00398">
    <property type="entry name" value="RrnaAD"/>
    <property type="match status" value="1"/>
</dbReference>
<dbReference type="SMART" id="SM00650">
    <property type="entry name" value="rADc"/>
    <property type="match status" value="1"/>
</dbReference>
<dbReference type="SUPFAM" id="SSF53335">
    <property type="entry name" value="S-adenosyl-L-methionine-dependent methyltransferases"/>
    <property type="match status" value="1"/>
</dbReference>
<dbReference type="PROSITE" id="PS01131">
    <property type="entry name" value="RRNA_A_DIMETH"/>
    <property type="match status" value="1"/>
</dbReference>
<dbReference type="PROSITE" id="PS51689">
    <property type="entry name" value="SAM_RNA_A_N6_MT"/>
    <property type="match status" value="1"/>
</dbReference>
<accession>A1UL32</accession>
<name>RSMA_MYCSK</name>
<proteinExistence type="inferred from homology"/>